<keyword id="KW-1015">Disulfide bond</keyword>
<keyword id="KW-0274">FAD</keyword>
<keyword id="KW-0285">Flavoprotein</keyword>
<keyword id="KW-0475">Mercuric resistance</keyword>
<keyword id="KW-0476">Mercury</keyword>
<keyword id="KW-0479">Metal-binding</keyword>
<keyword id="KW-0521">NADP</keyword>
<keyword id="KW-0560">Oxidoreductase</keyword>
<keyword id="KW-0614">Plasmid</keyword>
<keyword id="KW-0676">Redox-active center</keyword>
<protein>
    <recommendedName>
        <fullName>Mercuric reductase</fullName>
        <ecNumber evidence="1">1.16.1.1</ecNumber>
    </recommendedName>
    <alternativeName>
        <fullName>Hg(II) reductase</fullName>
    </alternativeName>
</protein>
<reference key="1">
    <citation type="journal article" date="1989" name="J. Bacteriol.">
        <title>Mercury operon regulation by the merR gene of the organomercurial resistance system of plasmid pDU1358.</title>
        <authorList>
            <person name="Nucifora G."/>
            <person name="Chu L."/>
            <person name="Silver S."/>
            <person name="Misra T.K."/>
        </authorList>
    </citation>
    <scope>NUCLEOTIDE SEQUENCE [GENOMIC DNA] OF 1-342</scope>
</reference>
<reference key="2">
    <citation type="journal article" date="1987" name="Proc. Natl. Acad. Sci. U.S.A.">
        <title>Cloning and DNA sequence of the mercuric- and organomercurial-resistance determinants of plasmid pDU1358.</title>
        <authorList>
            <person name="Griffin H.G."/>
            <person name="Foster T.J."/>
            <person name="Silver S."/>
            <person name="Misra T.K."/>
        </authorList>
    </citation>
    <scope>NUCLEOTIDE SEQUENCE [GENOMIC DNA] OF 343-460</scope>
</reference>
<proteinExistence type="inferred from homology"/>
<geneLocation type="plasmid">
    <name>pDU1358</name>
</geneLocation>
<accession>P08662</accession>
<name>MERA_SERMA</name>
<dbReference type="EC" id="1.16.1.1" evidence="1"/>
<dbReference type="EMBL" id="M24940">
    <property type="protein sequence ID" value="AAA98224.1"/>
    <property type="molecule type" value="Genomic_DNA"/>
</dbReference>
<dbReference type="EMBL" id="M15049">
    <property type="protein sequence ID" value="AAA88368.1"/>
    <property type="molecule type" value="Genomic_DNA"/>
</dbReference>
<dbReference type="PIR" id="A29010">
    <property type="entry name" value="A29010"/>
</dbReference>
<dbReference type="SMR" id="P08662"/>
<dbReference type="GO" id="GO:0050660">
    <property type="term" value="F:flavin adenine dinucleotide binding"/>
    <property type="evidence" value="ECO:0007669"/>
    <property type="project" value="TreeGrafter"/>
</dbReference>
<dbReference type="GO" id="GO:0016152">
    <property type="term" value="F:mercury (II) reductase (NADP+) activity"/>
    <property type="evidence" value="ECO:0007669"/>
    <property type="project" value="UniProtKB-EC"/>
</dbReference>
<dbReference type="GO" id="GO:0046872">
    <property type="term" value="F:metal ion binding"/>
    <property type="evidence" value="ECO:0007669"/>
    <property type="project" value="UniProtKB-KW"/>
</dbReference>
<dbReference type="GO" id="GO:0003955">
    <property type="term" value="F:NAD(P)H dehydrogenase (quinone) activity"/>
    <property type="evidence" value="ECO:0007669"/>
    <property type="project" value="TreeGrafter"/>
</dbReference>
<dbReference type="GO" id="GO:0016668">
    <property type="term" value="F:oxidoreductase activity, acting on a sulfur group of donors, NAD(P) as acceptor"/>
    <property type="evidence" value="ECO:0007669"/>
    <property type="project" value="InterPro"/>
</dbReference>
<dbReference type="GO" id="GO:0046689">
    <property type="term" value="P:response to mercury ion"/>
    <property type="evidence" value="ECO:0007669"/>
    <property type="project" value="UniProtKB-KW"/>
</dbReference>
<dbReference type="CDD" id="cd00371">
    <property type="entry name" value="HMA"/>
    <property type="match status" value="1"/>
</dbReference>
<dbReference type="FunFam" id="3.30.70.100:FF:000001">
    <property type="entry name" value="ATPase copper transporting beta"/>
    <property type="match status" value="1"/>
</dbReference>
<dbReference type="FunFam" id="3.30.390.30:FF:000001">
    <property type="entry name" value="Dihydrolipoyl dehydrogenase"/>
    <property type="match status" value="1"/>
</dbReference>
<dbReference type="Gene3D" id="3.30.390.30">
    <property type="match status" value="1"/>
</dbReference>
<dbReference type="Gene3D" id="3.30.70.100">
    <property type="match status" value="1"/>
</dbReference>
<dbReference type="Gene3D" id="3.50.50.60">
    <property type="entry name" value="FAD/NAD(P)-binding domain"/>
    <property type="match status" value="1"/>
</dbReference>
<dbReference type="InterPro" id="IPR036188">
    <property type="entry name" value="FAD/NAD-bd_sf"/>
</dbReference>
<dbReference type="InterPro" id="IPR023753">
    <property type="entry name" value="FAD/NAD-binding_dom"/>
</dbReference>
<dbReference type="InterPro" id="IPR016156">
    <property type="entry name" value="FAD/NAD-linked_Rdtase_dimer_sf"/>
</dbReference>
<dbReference type="InterPro" id="IPR017969">
    <property type="entry name" value="Heavy-metal-associated_CS"/>
</dbReference>
<dbReference type="InterPro" id="IPR006121">
    <property type="entry name" value="HMA_dom"/>
</dbReference>
<dbReference type="InterPro" id="IPR036163">
    <property type="entry name" value="HMA_dom_sf"/>
</dbReference>
<dbReference type="InterPro" id="IPR001100">
    <property type="entry name" value="Pyr_nuc-diS_OxRdtase"/>
</dbReference>
<dbReference type="InterPro" id="IPR004099">
    <property type="entry name" value="Pyr_nucl-diS_OxRdtase_dimer"/>
</dbReference>
<dbReference type="InterPro" id="IPR012999">
    <property type="entry name" value="Pyr_OxRdtase_I_AS"/>
</dbReference>
<dbReference type="PANTHER" id="PTHR43014">
    <property type="entry name" value="MERCURIC REDUCTASE"/>
    <property type="match status" value="1"/>
</dbReference>
<dbReference type="PANTHER" id="PTHR43014:SF2">
    <property type="entry name" value="MERCURIC REDUCTASE"/>
    <property type="match status" value="1"/>
</dbReference>
<dbReference type="Pfam" id="PF00403">
    <property type="entry name" value="HMA"/>
    <property type="match status" value="1"/>
</dbReference>
<dbReference type="Pfam" id="PF07992">
    <property type="entry name" value="Pyr_redox_2"/>
    <property type="match status" value="1"/>
</dbReference>
<dbReference type="Pfam" id="PF02852">
    <property type="entry name" value="Pyr_redox_dim"/>
    <property type="match status" value="1"/>
</dbReference>
<dbReference type="PIRSF" id="PIRSF000350">
    <property type="entry name" value="Mercury_reductase_MerA"/>
    <property type="match status" value="1"/>
</dbReference>
<dbReference type="PRINTS" id="PR00945">
    <property type="entry name" value="HGRDTASE"/>
</dbReference>
<dbReference type="SUPFAM" id="SSF51905">
    <property type="entry name" value="FAD/NAD(P)-binding domain"/>
    <property type="match status" value="1"/>
</dbReference>
<dbReference type="SUPFAM" id="SSF55424">
    <property type="entry name" value="FAD/NAD-linked reductases, dimerisation (C-terminal) domain"/>
    <property type="match status" value="1"/>
</dbReference>
<dbReference type="SUPFAM" id="SSF55008">
    <property type="entry name" value="HMA, heavy metal-associated domain"/>
    <property type="match status" value="1"/>
</dbReference>
<dbReference type="PROSITE" id="PS01047">
    <property type="entry name" value="HMA_1"/>
    <property type="match status" value="1"/>
</dbReference>
<dbReference type="PROSITE" id="PS50846">
    <property type="entry name" value="HMA_2"/>
    <property type="match status" value="1"/>
</dbReference>
<dbReference type="PROSITE" id="PS00076">
    <property type="entry name" value="PYRIDINE_REDOX_1"/>
    <property type="match status" value="1"/>
</dbReference>
<feature type="chain" id="PRO_0000068000" description="Mercuric reductase">
    <location>
        <begin position="1"/>
        <end position="460"/>
    </location>
</feature>
<feature type="domain" description="HMA" evidence="2">
    <location>
        <begin position="1"/>
        <end position="65"/>
    </location>
</feature>
<feature type="binding site" evidence="2">
    <location>
        <position position="11"/>
    </location>
    <ligand>
        <name>a metal cation</name>
        <dbReference type="ChEBI" id="CHEBI:25213"/>
    </ligand>
</feature>
<feature type="binding site" evidence="2">
    <location>
        <position position="14"/>
    </location>
    <ligand>
        <name>a metal cation</name>
        <dbReference type="ChEBI" id="CHEBI:25213"/>
    </ligand>
</feature>
<feature type="binding site" evidence="1">
    <location>
        <position position="110"/>
    </location>
    <ligand>
        <name>FAD</name>
        <dbReference type="ChEBI" id="CHEBI:57692"/>
    </ligand>
</feature>
<feature type="binding site" evidence="1">
    <location>
        <position position="130"/>
    </location>
    <ligand>
        <name>FAD</name>
        <dbReference type="ChEBI" id="CHEBI:57692"/>
    </ligand>
</feature>
<feature type="binding site" evidence="1">
    <location>
        <position position="135"/>
    </location>
    <ligand>
        <name>FAD</name>
        <dbReference type="ChEBI" id="CHEBI:57692"/>
    </ligand>
</feature>
<feature type="binding site" evidence="1">
    <location>
        <position position="145"/>
    </location>
    <ligand>
        <name>FAD</name>
        <dbReference type="ChEBI" id="CHEBI:57692"/>
    </ligand>
</feature>
<feature type="binding site" evidence="1">
    <location>
        <position position="211"/>
    </location>
    <ligand>
        <name>FAD</name>
        <dbReference type="ChEBI" id="CHEBI:57692"/>
    </ligand>
</feature>
<feature type="binding site" evidence="1">
    <location>
        <position position="457"/>
    </location>
    <ligand>
        <name>Hg(2+)</name>
        <dbReference type="ChEBI" id="CHEBI:16793"/>
    </ligand>
</feature>
<feature type="binding site" evidence="1">
    <location>
        <position position="458"/>
    </location>
    <ligand>
        <name>Hg(2+)</name>
        <dbReference type="ChEBI" id="CHEBI:16793"/>
    </ligand>
</feature>
<feature type="disulfide bond" description="Redox-active" evidence="1">
    <location>
        <begin position="136"/>
        <end position="141"/>
    </location>
</feature>
<feature type="non-consecutive residues" evidence="3">
    <location>
        <begin position="342"/>
        <end position="343"/>
    </location>
</feature>
<comment type="function">
    <text evidence="1">Resistance to Hg(2+) in bacteria appears to be governed by a specialized system which includes mercuric reductase. MerA protein is responsible for volatilizing mercury as Hg(0).</text>
</comment>
<comment type="catalytic activity">
    <reaction evidence="1">
        <text>Hg + NADP(+) + H(+) = Hg(2+) + NADPH</text>
        <dbReference type="Rhea" id="RHEA:23856"/>
        <dbReference type="ChEBI" id="CHEBI:15378"/>
        <dbReference type="ChEBI" id="CHEBI:16170"/>
        <dbReference type="ChEBI" id="CHEBI:16793"/>
        <dbReference type="ChEBI" id="CHEBI:57783"/>
        <dbReference type="ChEBI" id="CHEBI:58349"/>
        <dbReference type="EC" id="1.16.1.1"/>
    </reaction>
</comment>
<comment type="cofactor">
    <cofactor evidence="1">
        <name>FAD</name>
        <dbReference type="ChEBI" id="CHEBI:57692"/>
    </cofactor>
    <text evidence="1">Binds 1 FAD per subunit.</text>
</comment>
<comment type="subunit">
    <text evidence="1">Homodimer.</text>
</comment>
<comment type="miscellaneous">
    <text evidence="1">The active site is a redox-active disulfide bond.</text>
</comment>
<comment type="similarity">
    <text evidence="3">Belongs to the class-I pyridine nucleotide-disulfide oxidoreductase family.</text>
</comment>
<evidence type="ECO:0000250" key="1">
    <source>
        <dbReference type="UniProtKB" id="P00392"/>
    </source>
</evidence>
<evidence type="ECO:0000255" key="2">
    <source>
        <dbReference type="PROSITE-ProRule" id="PRU00280"/>
    </source>
</evidence>
<evidence type="ECO:0000305" key="3"/>
<organism>
    <name type="scientific">Serratia marcescens</name>
    <dbReference type="NCBI Taxonomy" id="615"/>
    <lineage>
        <taxon>Bacteria</taxon>
        <taxon>Pseudomonadati</taxon>
        <taxon>Pseudomonadota</taxon>
        <taxon>Gammaproteobacteria</taxon>
        <taxon>Enterobacterales</taxon>
        <taxon>Yersiniaceae</taxon>
        <taxon>Serratia</taxon>
    </lineage>
</organism>
<sequence>MTHLKITGMTCDSCAAHVKEALEKVPGVQSAIVSYAKGAAQLALDPGTAPDALTAAVAGLGYKAMLADAPPTDNRTGLFDKVRGWMGAADKGSGAERPLQVAVIGSGGAAMAAALKAVEQGAQVTLIERGTIGGTCVNVGCVPSKIMIRAAHIAHLRRESPFDGGMPPTPPTILRERLLAQQQARVEELRHAKYEGILDGNSAITVRHGEARFKDDRDLSVSLNEGGERVVMFDRCLVATGASPAMPPIPGLKESPYWTSTEALVSDTIPERLAVIGSSVVALELAQAFARLGSQVTILARNTLFFRDDPSIGEAVTAAFRAEGIKVLEHTQASQVAHVNGEDPQVATVGYSEAEAHHDGIETDSRTLTLDNVPRALANFDTRGFIKLVIEEGSGRLIGVQVVAPEAGELIQTAVLAIRNRMTVQELADQLFPYLTMVEGLKLAAQTFTKDVKQLSCCAG</sequence>
<gene>
    <name type="primary">merA</name>
</gene>